<keyword id="KW-0002">3D-structure</keyword>
<keyword id="KW-0223">Dioxygenase</keyword>
<keyword id="KW-0903">Direct protein sequencing</keyword>
<keyword id="KW-0408">Iron</keyword>
<keyword id="KW-0479">Metal-binding</keyword>
<keyword id="KW-0560">Oxidoreductase</keyword>
<keyword id="KW-0585">Phenylalanine catabolism</keyword>
<keyword id="KW-0677">Repeat</keyword>
<keyword id="KW-0828">Tyrosine catabolism</keyword>
<sequence length="357" mass="40061">ADLYENPMGLMGFEFIELASPTPNTLEPIFEIMGFTKVATHRSKDVHLYRQGAINLILNNEPHSVASYFAAEHGPSVCGMAFRVKDSQKAYKRALELGAQPIHIETGPMELNLPAIKGIGGAPLYLIDRFGEGSSIYDIDFVFLEGVDRHPVGAGLKIIDHLTHNVYRGRMAYWANFYEKLFNFREIRYFDIKGEYTGLTSKAMTAPDGMIRIPLNEESSKGAGQIEEFLMQFNGEGIQHVAFLSDDLIKTWDHLKSIGMRFMTAPPDTYYEMLEGRLPNHGEPVGELQARGILLDGSSESGDKRLLLQIFSETLMGPVFFEFIQRKGDDGFGEGNFKALFESIERDQVRRGVLSTD</sequence>
<reference key="1">
    <citation type="journal article" date="1992" name="Eur. J. Biochem.">
        <title>Characterization of 4-hydroxyphenylpyruvate dioxygenase. Primary structure of the Pseudomonas enzyme.</title>
        <authorList>
            <person name="Rueetschi U."/>
            <person name="Odelhoeg B."/>
            <person name="Lindstedt S."/>
            <person name="Barros-Soederling J."/>
            <person name="Persson B."/>
            <person name="Joernvall H."/>
        </authorList>
    </citation>
    <scope>PROTEIN SEQUENCE</scope>
</reference>
<reference key="2">
    <citation type="journal article" date="1999" name="Structure">
        <title>Crystal structure of Pseudomonas fluorescens 4-hydroxyphenylpyruvate dioxygenase: an enzyme involved in the tyrosine degradation pathway.</title>
        <authorList>
            <person name="Serre L."/>
            <person name="Sailland A."/>
            <person name="Sy D."/>
            <person name="Boudec P."/>
            <person name="Rolland A."/>
            <person name="Pebay-Peyroula E."/>
            <person name="Cohen-Addad C."/>
        </authorList>
    </citation>
    <scope>X-RAY CRYSTALLOGRAPHY (2.4 ANGSTROMS)</scope>
</reference>
<dbReference type="EC" id="1.13.11.27"/>
<dbReference type="PIR" id="S21209">
    <property type="entry name" value="S21209"/>
</dbReference>
<dbReference type="PDB" id="1CJX">
    <property type="method" value="X-ray"/>
    <property type="resolution" value="2.40 A"/>
    <property type="chains" value="A/B/C/D=1-357"/>
</dbReference>
<dbReference type="PDBsum" id="1CJX"/>
<dbReference type="SMR" id="P80064"/>
<dbReference type="BioCyc" id="MetaCyc:MONOMER-12032"/>
<dbReference type="BRENDA" id="1.13.11.27">
    <property type="organism ID" value="5121"/>
</dbReference>
<dbReference type="UniPathway" id="UPA00139">
    <property type="reaction ID" value="UER00362"/>
</dbReference>
<dbReference type="EvolutionaryTrace" id="P80064"/>
<dbReference type="GO" id="GO:0003868">
    <property type="term" value="F:4-hydroxyphenylpyruvate dioxygenase activity"/>
    <property type="evidence" value="ECO:0007669"/>
    <property type="project" value="UniProtKB-EC"/>
</dbReference>
<dbReference type="GO" id="GO:0046872">
    <property type="term" value="F:metal ion binding"/>
    <property type="evidence" value="ECO:0007669"/>
    <property type="project" value="UniProtKB-KW"/>
</dbReference>
<dbReference type="GO" id="GO:0006559">
    <property type="term" value="P:L-phenylalanine catabolic process"/>
    <property type="evidence" value="ECO:0007669"/>
    <property type="project" value="UniProtKB-UniPathway"/>
</dbReference>
<dbReference type="GO" id="GO:0006572">
    <property type="term" value="P:tyrosine catabolic process"/>
    <property type="evidence" value="ECO:0007669"/>
    <property type="project" value="UniProtKB-KW"/>
</dbReference>
<dbReference type="CDD" id="cd07250">
    <property type="entry name" value="HPPD_C_like"/>
    <property type="match status" value="1"/>
</dbReference>
<dbReference type="CDD" id="cd08342">
    <property type="entry name" value="HPPD_N_like"/>
    <property type="match status" value="1"/>
</dbReference>
<dbReference type="FunFam" id="3.10.180.10:FF:000007">
    <property type="entry name" value="4-hydroxyphenylpyruvate dioxygenase"/>
    <property type="match status" value="1"/>
</dbReference>
<dbReference type="Gene3D" id="3.10.180.10">
    <property type="entry name" value="2,3-Dihydroxybiphenyl 1,2-Dioxygenase, domain 1"/>
    <property type="match status" value="2"/>
</dbReference>
<dbReference type="InterPro" id="IPR005956">
    <property type="entry name" value="4OHPhenylPyrv_dOase"/>
</dbReference>
<dbReference type="InterPro" id="IPR041735">
    <property type="entry name" value="4OHPhenylPyrv_dOase_C"/>
</dbReference>
<dbReference type="InterPro" id="IPR041736">
    <property type="entry name" value="4OHPhenylPyrv_dOase_N"/>
</dbReference>
<dbReference type="InterPro" id="IPR029068">
    <property type="entry name" value="Glyas_Bleomycin-R_OHBP_Dase"/>
</dbReference>
<dbReference type="InterPro" id="IPR004360">
    <property type="entry name" value="Glyas_Fos-R_dOase_dom"/>
</dbReference>
<dbReference type="InterPro" id="IPR037523">
    <property type="entry name" value="VOC"/>
</dbReference>
<dbReference type="NCBIfam" id="TIGR01263">
    <property type="entry name" value="4HPPD"/>
    <property type="match status" value="1"/>
</dbReference>
<dbReference type="PANTHER" id="PTHR11959">
    <property type="entry name" value="4-HYDROXYPHENYLPYRUVATE DIOXYGENASE"/>
    <property type="match status" value="1"/>
</dbReference>
<dbReference type="PANTHER" id="PTHR11959:SF1">
    <property type="entry name" value="4-HYDROXYPHENYLPYRUVATE DIOXYGENASE"/>
    <property type="match status" value="1"/>
</dbReference>
<dbReference type="Pfam" id="PF00903">
    <property type="entry name" value="Glyoxalase"/>
    <property type="match status" value="1"/>
</dbReference>
<dbReference type="Pfam" id="PF14696">
    <property type="entry name" value="Glyoxalase_5"/>
    <property type="match status" value="1"/>
</dbReference>
<dbReference type="PIRSF" id="PIRSF009283">
    <property type="entry name" value="HPP_dOase"/>
    <property type="match status" value="1"/>
</dbReference>
<dbReference type="SUPFAM" id="SSF54593">
    <property type="entry name" value="Glyoxalase/Bleomycin resistance protein/Dihydroxybiphenyl dioxygenase"/>
    <property type="match status" value="1"/>
</dbReference>
<dbReference type="PROSITE" id="PS51819">
    <property type="entry name" value="VOC"/>
    <property type="match status" value="2"/>
</dbReference>
<gene>
    <name type="primary">hpd</name>
</gene>
<evidence type="ECO:0000255" key="1">
    <source>
        <dbReference type="PROSITE-ProRule" id="PRU01163"/>
    </source>
</evidence>
<evidence type="ECO:0000305" key="2"/>
<evidence type="ECO:0007829" key="3">
    <source>
        <dbReference type="PDB" id="1CJX"/>
    </source>
</evidence>
<accession>P80064</accession>
<protein>
    <recommendedName>
        <fullName>4-hydroxyphenylpyruvate dioxygenase</fullName>
        <shortName>4HPPD</shortName>
        <shortName>HPD</shortName>
        <shortName>HPPDase</shortName>
        <ecNumber>1.13.11.27</ecNumber>
    </recommendedName>
</protein>
<comment type="catalytic activity">
    <reaction>
        <text>3-(4-hydroxyphenyl)pyruvate + O2 = homogentisate + CO2</text>
        <dbReference type="Rhea" id="RHEA:16189"/>
        <dbReference type="ChEBI" id="CHEBI:15379"/>
        <dbReference type="ChEBI" id="CHEBI:16169"/>
        <dbReference type="ChEBI" id="CHEBI:16526"/>
        <dbReference type="ChEBI" id="CHEBI:36242"/>
        <dbReference type="EC" id="1.13.11.27"/>
    </reaction>
</comment>
<comment type="cofactor">
    <cofactor>
        <name>Fe cation</name>
        <dbReference type="ChEBI" id="CHEBI:24875"/>
    </cofactor>
    <text>Binds 1 Fe cation per subunit.</text>
</comment>
<comment type="pathway">
    <text>Amino-acid degradation; L-phenylalanine degradation; acetoacetate and fumarate from L-phenylalanine: step 3/6.</text>
</comment>
<comment type="subunit">
    <text>Homotetramer.</text>
</comment>
<comment type="similarity">
    <text evidence="2">Belongs to the 4HPPD family.</text>
</comment>
<feature type="chain" id="PRO_0000088408" description="4-hydroxyphenylpyruvate dioxygenase">
    <location>
        <begin position="1"/>
        <end position="357"/>
    </location>
</feature>
<feature type="domain" description="VOC 1" evidence="1">
    <location>
        <begin position="12"/>
        <end position="129"/>
    </location>
</feature>
<feature type="domain" description="VOC 2" evidence="1">
    <location>
        <begin position="158"/>
        <end position="313"/>
    </location>
</feature>
<feature type="binding site">
    <location>
        <position position="161"/>
    </location>
    <ligand>
        <name>Fe cation</name>
        <dbReference type="ChEBI" id="CHEBI:24875"/>
    </ligand>
</feature>
<feature type="binding site">
    <location>
        <position position="240"/>
    </location>
    <ligand>
        <name>Fe cation</name>
        <dbReference type="ChEBI" id="CHEBI:24875"/>
    </ligand>
</feature>
<feature type="binding site">
    <location>
        <position position="322"/>
    </location>
    <ligand>
        <name>Fe cation</name>
        <dbReference type="ChEBI" id="CHEBI:24875"/>
    </ligand>
</feature>
<feature type="strand" evidence="3">
    <location>
        <begin position="10"/>
        <end position="19"/>
    </location>
</feature>
<feature type="helix" evidence="3">
    <location>
        <begin position="27"/>
        <end position="32"/>
    </location>
</feature>
<feature type="strand" evidence="3">
    <location>
        <begin position="36"/>
        <end position="51"/>
    </location>
</feature>
<feature type="strand" evidence="3">
    <location>
        <begin position="54"/>
        <end position="59"/>
    </location>
</feature>
<feature type="strand" evidence="3">
    <location>
        <begin position="62"/>
        <end position="64"/>
    </location>
</feature>
<feature type="helix" evidence="3">
    <location>
        <begin position="65"/>
        <end position="73"/>
    </location>
</feature>
<feature type="strand" evidence="3">
    <location>
        <begin position="74"/>
        <end position="85"/>
    </location>
</feature>
<feature type="helix" evidence="3">
    <location>
        <begin position="87"/>
        <end position="96"/>
    </location>
</feature>
<feature type="strand" evidence="3">
    <location>
        <begin position="115"/>
        <end position="117"/>
    </location>
</feature>
<feature type="helix" evidence="3">
    <location>
        <begin position="119"/>
        <end position="121"/>
    </location>
</feature>
<feature type="strand" evidence="3">
    <location>
        <begin position="123"/>
        <end position="127"/>
    </location>
</feature>
<feature type="strand" evidence="3">
    <location>
        <begin position="131"/>
        <end position="133"/>
    </location>
</feature>
<feature type="helix" evidence="3">
    <location>
        <begin position="136"/>
        <end position="140"/>
    </location>
</feature>
<feature type="strand" evidence="3">
    <location>
        <begin position="141"/>
        <end position="143"/>
    </location>
</feature>
<feature type="strand" evidence="3">
    <location>
        <begin position="155"/>
        <end position="162"/>
    </location>
</feature>
<feature type="helix" evidence="3">
    <location>
        <begin position="170"/>
        <end position="182"/>
    </location>
</feature>
<feature type="strand" evidence="3">
    <location>
        <begin position="185"/>
        <end position="193"/>
    </location>
</feature>
<feature type="strand" evidence="3">
    <location>
        <begin position="198"/>
        <end position="205"/>
    </location>
</feature>
<feature type="strand" evidence="3">
    <location>
        <begin position="212"/>
        <end position="218"/>
    </location>
</feature>
<feature type="helix" evidence="3">
    <location>
        <begin position="225"/>
        <end position="233"/>
    </location>
</feature>
<feature type="strand" evidence="3">
    <location>
        <begin position="235"/>
        <end position="237"/>
    </location>
</feature>
<feature type="strand" evidence="3">
    <location>
        <begin position="240"/>
        <end position="246"/>
    </location>
</feature>
<feature type="helix" evidence="3">
    <location>
        <begin position="248"/>
        <end position="257"/>
    </location>
</feature>
<feature type="helix" evidence="3">
    <location>
        <begin position="268"/>
        <end position="272"/>
    </location>
</feature>
<feature type="helix" evidence="3">
    <location>
        <begin position="274"/>
        <end position="277"/>
    </location>
</feature>
<feature type="helix" evidence="3">
    <location>
        <begin position="285"/>
        <end position="291"/>
    </location>
</feature>
<feature type="strand" evidence="3">
    <location>
        <begin position="294"/>
        <end position="300"/>
    </location>
</feature>
<feature type="strand" evidence="3">
    <location>
        <begin position="303"/>
        <end position="312"/>
    </location>
</feature>
<feature type="strand" evidence="3">
    <location>
        <begin position="319"/>
        <end position="328"/>
    </location>
</feature>
<feature type="helix" evidence="3">
    <location>
        <begin position="334"/>
        <end position="351"/>
    </location>
</feature>
<proteinExistence type="evidence at protein level"/>
<name>HPPD_PSEUJ</name>
<organism>
    <name type="scientific">Pseudomonas sp. (strain P.J. 874)</name>
    <dbReference type="NCBI Taxonomy" id="72587"/>
    <lineage>
        <taxon>Bacteria</taxon>
        <taxon>Pseudomonadati</taxon>
        <taxon>Pseudomonadota</taxon>
    </lineage>
</organism>